<keyword id="KW-0004">4Fe-4S</keyword>
<keyword id="KW-0408">Iron</keyword>
<keyword id="KW-0411">Iron-sulfur</keyword>
<keyword id="KW-0479">Metal-binding</keyword>
<keyword id="KW-1185">Reference proteome</keyword>
<keyword id="KW-0949">S-adenosyl-L-methionine</keyword>
<proteinExistence type="inferred from homology"/>
<gene>
    <name type="ordered locus">MJ0907</name>
</gene>
<organism>
    <name type="scientific">Methanocaldococcus jannaschii (strain ATCC 43067 / DSM 2661 / JAL-1 / JCM 10045 / NBRC 100440)</name>
    <name type="common">Methanococcus jannaschii</name>
    <dbReference type="NCBI Taxonomy" id="243232"/>
    <lineage>
        <taxon>Archaea</taxon>
        <taxon>Methanobacteriati</taxon>
        <taxon>Methanobacteriota</taxon>
        <taxon>Methanomada group</taxon>
        <taxon>Methanococci</taxon>
        <taxon>Methanococcales</taxon>
        <taxon>Methanocaldococcaceae</taxon>
        <taxon>Methanocaldococcus</taxon>
    </lineage>
</organism>
<reference key="1">
    <citation type="journal article" date="1996" name="Science">
        <title>Complete genome sequence of the methanogenic archaeon, Methanococcus jannaschii.</title>
        <authorList>
            <person name="Bult C.J."/>
            <person name="White O."/>
            <person name="Olsen G.J."/>
            <person name="Zhou L."/>
            <person name="Fleischmann R.D."/>
            <person name="Sutton G.G."/>
            <person name="Blake J.A."/>
            <person name="FitzGerald L.M."/>
            <person name="Clayton R.A."/>
            <person name="Gocayne J.D."/>
            <person name="Kerlavage A.R."/>
            <person name="Dougherty B.A."/>
            <person name="Tomb J.-F."/>
            <person name="Adams M.D."/>
            <person name="Reich C.I."/>
            <person name="Overbeek R."/>
            <person name="Kirkness E.F."/>
            <person name="Weinstock K.G."/>
            <person name="Merrick J.M."/>
            <person name="Glodek A."/>
            <person name="Scott J.L."/>
            <person name="Geoghagen N.S.M."/>
            <person name="Weidman J.F."/>
            <person name="Fuhrmann J.L."/>
            <person name="Nguyen D."/>
            <person name="Utterback T.R."/>
            <person name="Kelley J.M."/>
            <person name="Peterson J.D."/>
            <person name="Sadow P.W."/>
            <person name="Hanna M.C."/>
            <person name="Cotton M.D."/>
            <person name="Roberts K.M."/>
            <person name="Hurst M.A."/>
            <person name="Kaine B.P."/>
            <person name="Borodovsky M."/>
            <person name="Klenk H.-P."/>
            <person name="Fraser C.M."/>
            <person name="Smith H.O."/>
            <person name="Woese C.R."/>
            <person name="Venter J.C."/>
        </authorList>
    </citation>
    <scope>NUCLEOTIDE SEQUENCE [LARGE SCALE GENOMIC DNA]</scope>
    <source>
        <strain>ATCC 43067 / DSM 2661 / JAL-1 / JCM 10045 / NBRC 100440</strain>
    </source>
</reference>
<protein>
    <recommendedName>
        <fullName>Uncharacterized protein MJ0907</fullName>
    </recommendedName>
</protein>
<sequence>MVDGMKHLILKVTNRCNLNCIYCYANNKNNKDMDFKTAKNAIDYLLNLDNQIKIQFTGGEPLLNFNLIEKIVDYCNDNYSNCNIQYAIQTNATLINEKIAEKIKELDIKVGISIDGLEINDILRPYKNGKPSTLDTLKGMYILKSYNIPFGITTVVTNKNLPYLEEFVKYLIAFGVKSISFDLLKPKKKEHLTLMPNIEEFNKLLNKLGRYPIYIKNLQKRPKDKYCYLNSGDLLFVNEFGDIYLCPTLEGLSCLGNINDKNKIKLPKVKSKGCYAREFLIKTFKK</sequence>
<accession>Q58317</accession>
<feature type="chain" id="PRO_0000134466" description="Uncharacterized protein MJ0907">
    <location>
        <begin position="1"/>
        <end position="286"/>
    </location>
</feature>
<feature type="domain" description="Radical SAM core" evidence="1">
    <location>
        <begin position="2"/>
        <end position="221"/>
    </location>
</feature>
<feature type="binding site" evidence="1">
    <location>
        <position position="16"/>
    </location>
    <ligand>
        <name>[4Fe-4S] cluster</name>
        <dbReference type="ChEBI" id="CHEBI:49883"/>
        <note>4Fe-4S-S-AdoMet</note>
    </ligand>
</feature>
<feature type="binding site" evidence="1">
    <location>
        <position position="20"/>
    </location>
    <ligand>
        <name>[4Fe-4S] cluster</name>
        <dbReference type="ChEBI" id="CHEBI:49883"/>
        <note>4Fe-4S-S-AdoMet</note>
    </ligand>
</feature>
<feature type="binding site" evidence="1">
    <location>
        <position position="23"/>
    </location>
    <ligand>
        <name>[4Fe-4S] cluster</name>
        <dbReference type="ChEBI" id="CHEBI:49883"/>
        <note>4Fe-4S-S-AdoMet</note>
    </ligand>
</feature>
<name>Y907_METJA</name>
<comment type="cofactor">
    <cofactor evidence="1">
        <name>[4Fe-4S] cluster</name>
        <dbReference type="ChEBI" id="CHEBI:49883"/>
    </cofactor>
</comment>
<comment type="similarity">
    <text evidence="2">Belongs to the radical SAM superfamily. Anaerobic sulfatase-maturating enzyme family.</text>
</comment>
<dbReference type="EMBL" id="L77117">
    <property type="protein sequence ID" value="AAB98909.1"/>
    <property type="molecule type" value="Genomic_DNA"/>
</dbReference>
<dbReference type="PIR" id="C64413">
    <property type="entry name" value="C64413"/>
</dbReference>
<dbReference type="SMR" id="Q58317"/>
<dbReference type="STRING" id="243232.MJ_0907"/>
<dbReference type="PaxDb" id="243232-MJ_0907"/>
<dbReference type="EnsemblBacteria" id="AAB98909">
    <property type="protein sequence ID" value="AAB98909"/>
    <property type="gene ID" value="MJ_0907"/>
</dbReference>
<dbReference type="KEGG" id="mja:MJ_0907"/>
<dbReference type="eggNOG" id="arCOG00945">
    <property type="taxonomic scope" value="Archaea"/>
</dbReference>
<dbReference type="HOGENOM" id="CLU_009273_3_2_2"/>
<dbReference type="InParanoid" id="Q58317"/>
<dbReference type="PhylomeDB" id="Q58317"/>
<dbReference type="Proteomes" id="UP000000805">
    <property type="component" value="Chromosome"/>
</dbReference>
<dbReference type="GO" id="GO:0051539">
    <property type="term" value="F:4 iron, 4 sulfur cluster binding"/>
    <property type="evidence" value="ECO:0007669"/>
    <property type="project" value="UniProtKB-KW"/>
</dbReference>
<dbReference type="GO" id="GO:0046872">
    <property type="term" value="F:metal ion binding"/>
    <property type="evidence" value="ECO:0007669"/>
    <property type="project" value="UniProtKB-KW"/>
</dbReference>
<dbReference type="GO" id="GO:0016491">
    <property type="term" value="F:oxidoreductase activity"/>
    <property type="evidence" value="ECO:0007669"/>
    <property type="project" value="InterPro"/>
</dbReference>
<dbReference type="CDD" id="cd01335">
    <property type="entry name" value="Radical_SAM"/>
    <property type="match status" value="1"/>
</dbReference>
<dbReference type="Gene3D" id="3.20.20.70">
    <property type="entry name" value="Aldolase class I"/>
    <property type="match status" value="1"/>
</dbReference>
<dbReference type="InterPro" id="IPR013785">
    <property type="entry name" value="Aldolase_TIM"/>
</dbReference>
<dbReference type="InterPro" id="IPR000385">
    <property type="entry name" value="MoaA_NifB_PqqE_Fe-S-bd_CS"/>
</dbReference>
<dbReference type="InterPro" id="IPR007197">
    <property type="entry name" value="rSAM"/>
</dbReference>
<dbReference type="InterPro" id="IPR023867">
    <property type="entry name" value="Sulphatase_maturase_rSAM"/>
</dbReference>
<dbReference type="PANTHER" id="PTHR43273">
    <property type="entry name" value="ANAEROBIC SULFATASE-MATURATING ENZYME HOMOLOG ASLB-RELATED"/>
    <property type="match status" value="1"/>
</dbReference>
<dbReference type="PANTHER" id="PTHR43273:SF3">
    <property type="entry name" value="ANAEROBIC SULFATASE-MATURATING ENZYME HOMOLOG ASLB-RELATED"/>
    <property type="match status" value="1"/>
</dbReference>
<dbReference type="Pfam" id="PF13353">
    <property type="entry name" value="Fer4_12"/>
    <property type="match status" value="1"/>
</dbReference>
<dbReference type="Pfam" id="PF04055">
    <property type="entry name" value="Radical_SAM"/>
    <property type="match status" value="1"/>
</dbReference>
<dbReference type="SFLD" id="SFLDG01072">
    <property type="entry name" value="dehydrogenase_like"/>
    <property type="match status" value="1"/>
</dbReference>
<dbReference type="SFLD" id="SFLDG01384">
    <property type="entry name" value="thioether_bond_formation_requi"/>
    <property type="match status" value="1"/>
</dbReference>
<dbReference type="SUPFAM" id="SSF102114">
    <property type="entry name" value="Radical SAM enzymes"/>
    <property type="match status" value="1"/>
</dbReference>
<dbReference type="PROSITE" id="PS51918">
    <property type="entry name" value="RADICAL_SAM"/>
    <property type="match status" value="1"/>
</dbReference>
<evidence type="ECO:0000255" key="1">
    <source>
        <dbReference type="PROSITE-ProRule" id="PRU01266"/>
    </source>
</evidence>
<evidence type="ECO:0000305" key="2"/>